<protein>
    <recommendedName>
        <fullName evidence="6">Chlorotoxin-like peptide MeuClTx</fullName>
    </recommendedName>
    <alternativeName>
        <fullName evidence="5">Chloride channel toxin-like peptide</fullName>
    </alternativeName>
</protein>
<sequence>TEAMCMPCFTTDHNMAKKCRDCCGGNGKCFGYQCLCNRG</sequence>
<reference key="1">
    <citation type="submission" date="2009-11" db="EMBL/GenBank/DDBJ databases">
        <title>Molecular characterization of a chloride channel toxin-like peptide from the scorpion Mesobuthus eupeus.</title>
        <authorList>
            <person name="Zhu S."/>
            <person name="Gao B."/>
        </authorList>
    </citation>
    <scope>NUCLEOTIDE SEQUENCE [MRNA]</scope>
</reference>
<reference key="2">
    <citation type="submission" date="2009-11" db="UniProtKB">
        <title>Characterization of chloride channel toxin-like peptide from the scorpion Mesobuthus eupeus.</title>
        <authorList>
            <person name="Shunyi S.Y."/>
            <person name="Gao B."/>
        </authorList>
    </citation>
    <scope>PROTEIN SEQUENCE OF 4-38</scope>
    <scope>FUNCTION</scope>
    <scope>SUBCELLULAR LOCATION</scope>
    <scope>MASS SPECTROMETRY</scope>
    <scope>AMIDATION AT ARG-38</scope>
    <source>
        <tissue>Venom</tissue>
    </source>
</reference>
<accession>P86401</accession>
<accession>R4H616</accession>
<dbReference type="EMBL" id="GU187951">
    <property type="protein sequence ID" value="ADT64274.1"/>
    <property type="molecule type" value="mRNA"/>
</dbReference>
<dbReference type="SMR" id="P86401"/>
<dbReference type="GO" id="GO:0005576">
    <property type="term" value="C:extracellular region"/>
    <property type="evidence" value="ECO:0007669"/>
    <property type="project" value="UniProtKB-SubCell"/>
</dbReference>
<dbReference type="GO" id="GO:0015459">
    <property type="term" value="F:potassium channel regulator activity"/>
    <property type="evidence" value="ECO:0007669"/>
    <property type="project" value="UniProtKB-KW"/>
</dbReference>
<dbReference type="GO" id="GO:0090729">
    <property type="term" value="F:toxin activity"/>
    <property type="evidence" value="ECO:0007669"/>
    <property type="project" value="UniProtKB-KW"/>
</dbReference>
<dbReference type="InterPro" id="IPR036574">
    <property type="entry name" value="Scorpion_toxin-like_sf"/>
</dbReference>
<dbReference type="InterPro" id="IPR007958">
    <property type="entry name" value="Scorpion_toxinS_Cl_inh"/>
</dbReference>
<dbReference type="Pfam" id="PF05294">
    <property type="entry name" value="Toxin_5"/>
    <property type="match status" value="1"/>
</dbReference>
<dbReference type="SUPFAM" id="SSF57095">
    <property type="entry name" value="Scorpion toxin-like"/>
    <property type="match status" value="1"/>
</dbReference>
<dbReference type="PROSITE" id="PS51200">
    <property type="entry name" value="SHORT_SCORPION_CHLORIDE"/>
    <property type="match status" value="1"/>
</dbReference>
<proteinExistence type="evidence at protein level"/>
<keyword id="KW-0027">Amidation</keyword>
<keyword id="KW-0903">Direct protein sequencing</keyword>
<keyword id="KW-1015">Disulfide bond</keyword>
<keyword id="KW-0872">Ion channel impairing toxin</keyword>
<keyword id="KW-0960">Knottin</keyword>
<keyword id="KW-0632">Potassium channel impairing toxin</keyword>
<keyword id="KW-0964">Secreted</keyword>
<keyword id="KW-0732">Signal</keyword>
<keyword id="KW-0800">Toxin</keyword>
<keyword id="KW-1220">Voltage-gated potassium channel impairing toxin</keyword>
<organism>
    <name type="scientific">Mesobuthus eupeus</name>
    <name type="common">Lesser Asian scorpion</name>
    <name type="synonym">Buthus eupeus</name>
    <dbReference type="NCBI Taxonomy" id="34648"/>
    <lineage>
        <taxon>Eukaryota</taxon>
        <taxon>Metazoa</taxon>
        <taxon>Ecdysozoa</taxon>
        <taxon>Arthropoda</taxon>
        <taxon>Chelicerata</taxon>
        <taxon>Arachnida</taxon>
        <taxon>Scorpiones</taxon>
        <taxon>Buthida</taxon>
        <taxon>Buthoidea</taxon>
        <taxon>Buthidae</taxon>
        <taxon>Mesobuthus</taxon>
    </lineage>
</organism>
<evidence type="ECO:0000250" key="1">
    <source>
        <dbReference type="UniProtKB" id="P15222"/>
    </source>
</evidence>
<evidence type="ECO:0000255" key="2"/>
<evidence type="ECO:0000255" key="3">
    <source>
        <dbReference type="PROSITE-ProRule" id="PRU00545"/>
    </source>
</evidence>
<evidence type="ECO:0000269" key="4">
    <source ref="2"/>
</evidence>
<evidence type="ECO:0000303" key="5">
    <source ref="2"/>
</evidence>
<evidence type="ECO:0000305" key="6"/>
<evidence type="ECO:0000305" key="7">
    <source ref="2"/>
</evidence>
<feature type="signal peptide" evidence="2">
    <location>
        <begin position="1" status="less than"/>
        <end position="3"/>
    </location>
</feature>
<feature type="peptide" id="PRO_0000401124" description="Chlorotoxin-like peptide MeuClTx" evidence="4">
    <location>
        <begin position="4"/>
        <end position="38"/>
    </location>
</feature>
<feature type="modified residue" description="Arginine amide" evidence="4">
    <location>
        <position position="38"/>
    </location>
</feature>
<feature type="disulfide bond" evidence="1 3">
    <location>
        <begin position="5"/>
        <end position="22"/>
    </location>
</feature>
<feature type="disulfide bond" evidence="1 3">
    <location>
        <begin position="8"/>
        <end position="29"/>
    </location>
</feature>
<feature type="disulfide bond" evidence="1 3">
    <location>
        <begin position="19"/>
        <end position="34"/>
    </location>
</feature>
<feature type="disulfide bond" evidence="1 3">
    <location>
        <begin position="23"/>
        <end position="36"/>
    </location>
</feature>
<feature type="non-terminal residue">
    <location>
        <position position="1"/>
    </location>
</feature>
<name>CTXL_MESEU</name>
<comment type="function">
    <text evidence="4">Inhibits Kv1.2/KCNA2 potassium channels. On glioma cells, may interact with chloride channels (probably Clc-3/CLCN3) and MMP2 at the surface of glioma cells. This complex may be then internalized via caveolae, thus inhibiting the chloride channels necessary for cell shrinkage and tumor propagation.</text>
</comment>
<comment type="subcellular location">
    <subcellularLocation>
        <location evidence="4">Secreted</location>
    </subcellularLocation>
</comment>
<comment type="tissue specificity">
    <text evidence="7">Expressed by the venom gland.</text>
</comment>
<comment type="domain">
    <text evidence="1">The presence of a 'disulfide through disulfide knot' structurally defines this protein as a knottin.</text>
</comment>
<comment type="mass spectrometry"/>
<comment type="similarity">
    <text evidence="3">Belongs to the short scorpion toxin superfamily. Chloride channel inhibitor family.</text>
</comment>